<organism>
    <name type="scientific">Deinococcus radiodurans (strain ATCC 13939 / DSM 20539 / JCM 16871 / CCUG 27074 / LMG 4051 / NBRC 15346 / NCIMB 9279 / VKM B-1422 / R1)</name>
    <dbReference type="NCBI Taxonomy" id="243230"/>
    <lineage>
        <taxon>Bacteria</taxon>
        <taxon>Thermotogati</taxon>
        <taxon>Deinococcota</taxon>
        <taxon>Deinococci</taxon>
        <taxon>Deinococcales</taxon>
        <taxon>Deinococcaceae</taxon>
        <taxon>Deinococcus</taxon>
    </lineage>
</organism>
<accession>Q9RYK1</accession>
<proteinExistence type="inferred from homology"/>
<dbReference type="EMBL" id="AE001825">
    <property type="protein sequence ID" value="AAF12467.1"/>
    <property type="molecule type" value="Genomic_DNA"/>
</dbReference>
<dbReference type="PIR" id="D75585">
    <property type="entry name" value="D75585"/>
</dbReference>
<dbReference type="RefSeq" id="NP_285634.1">
    <property type="nucleotide sequence ID" value="NC_001264.1"/>
</dbReference>
<dbReference type="RefSeq" id="WP_010889570.1">
    <property type="nucleotide sequence ID" value="NC_001264.1"/>
</dbReference>
<dbReference type="SMR" id="Q9RYK1"/>
<dbReference type="STRING" id="243230.DR_A0311"/>
<dbReference type="PaxDb" id="243230-DR_A0311"/>
<dbReference type="DNASU" id="1798026"/>
<dbReference type="EnsemblBacteria" id="AAF12467">
    <property type="protein sequence ID" value="AAF12467"/>
    <property type="gene ID" value="DR_A0311"/>
</dbReference>
<dbReference type="GeneID" id="69519195"/>
<dbReference type="KEGG" id="dra:DR_A0311"/>
<dbReference type="PATRIC" id="fig|243230.17.peg.3201"/>
<dbReference type="eggNOG" id="COG0829">
    <property type="taxonomic scope" value="Bacteria"/>
</dbReference>
<dbReference type="HOGENOM" id="CLU_056339_5_1_0"/>
<dbReference type="InParanoid" id="Q9RYK1"/>
<dbReference type="OrthoDB" id="5328682at2"/>
<dbReference type="Proteomes" id="UP000002524">
    <property type="component" value="Chromosome 2"/>
</dbReference>
<dbReference type="GO" id="GO:0005737">
    <property type="term" value="C:cytoplasm"/>
    <property type="evidence" value="ECO:0007669"/>
    <property type="project" value="UniProtKB-SubCell"/>
</dbReference>
<dbReference type="GO" id="GO:0016151">
    <property type="term" value="F:nickel cation binding"/>
    <property type="evidence" value="ECO:0007669"/>
    <property type="project" value="UniProtKB-UniRule"/>
</dbReference>
<dbReference type="HAMAP" id="MF_01384">
    <property type="entry name" value="UreD"/>
    <property type="match status" value="1"/>
</dbReference>
<dbReference type="InterPro" id="IPR002669">
    <property type="entry name" value="UreD"/>
</dbReference>
<dbReference type="PANTHER" id="PTHR33643">
    <property type="entry name" value="UREASE ACCESSORY PROTEIN D"/>
    <property type="match status" value="1"/>
</dbReference>
<dbReference type="PANTHER" id="PTHR33643:SF1">
    <property type="entry name" value="UREASE ACCESSORY PROTEIN D"/>
    <property type="match status" value="1"/>
</dbReference>
<dbReference type="Pfam" id="PF01774">
    <property type="entry name" value="UreD"/>
    <property type="match status" value="1"/>
</dbReference>
<name>URED_DEIRA</name>
<feature type="chain" id="PRO_0000340450" description="Urease accessory protein UreD">
    <location>
        <begin position="1"/>
        <end position="278"/>
    </location>
</feature>
<evidence type="ECO:0000255" key="1">
    <source>
        <dbReference type="HAMAP-Rule" id="MF_01384"/>
    </source>
</evidence>
<gene>
    <name evidence="1" type="primary">ureD</name>
    <name type="ordered locus">DR_A0311</name>
</gene>
<protein>
    <recommendedName>
        <fullName evidence="1">Urease accessory protein UreD</fullName>
    </recommendedName>
</protein>
<keyword id="KW-0143">Chaperone</keyword>
<keyword id="KW-0963">Cytoplasm</keyword>
<keyword id="KW-0996">Nickel insertion</keyword>
<keyword id="KW-1185">Reference proteome</keyword>
<comment type="function">
    <text evidence="1">Required for maturation of urease via the functional incorporation of the urease nickel metallocenter.</text>
</comment>
<comment type="subunit">
    <text evidence="1">UreD, UreF and UreG form a complex that acts as a GTP-hydrolysis-dependent molecular chaperone, activating the urease apoprotein by helping to assemble the nickel containing metallocenter of UreC. The UreE protein probably delivers the nickel.</text>
</comment>
<comment type="subcellular location">
    <subcellularLocation>
        <location evidence="1">Cytoplasm</location>
    </subcellularLocation>
</comment>
<comment type="similarity">
    <text evidence="1">Belongs to the UreD family.</text>
</comment>
<reference key="1">
    <citation type="journal article" date="1999" name="Science">
        <title>Genome sequence of the radioresistant bacterium Deinococcus radiodurans R1.</title>
        <authorList>
            <person name="White O."/>
            <person name="Eisen J.A."/>
            <person name="Heidelberg J.F."/>
            <person name="Hickey E.K."/>
            <person name="Peterson J.D."/>
            <person name="Dodson R.J."/>
            <person name="Haft D.H."/>
            <person name="Gwinn M.L."/>
            <person name="Nelson W.C."/>
            <person name="Richardson D.L."/>
            <person name="Moffat K.S."/>
            <person name="Qin H."/>
            <person name="Jiang L."/>
            <person name="Pamphile W."/>
            <person name="Crosby M."/>
            <person name="Shen M."/>
            <person name="Vamathevan J.J."/>
            <person name="Lam P."/>
            <person name="McDonald L.A."/>
            <person name="Utterback T.R."/>
            <person name="Zalewski C."/>
            <person name="Makarova K.S."/>
            <person name="Aravind L."/>
            <person name="Daly M.J."/>
            <person name="Minton K.W."/>
            <person name="Fleischmann R.D."/>
            <person name="Ketchum K.A."/>
            <person name="Nelson K.E."/>
            <person name="Salzberg S.L."/>
            <person name="Smith H.O."/>
            <person name="Venter J.C."/>
            <person name="Fraser C.M."/>
        </authorList>
    </citation>
    <scope>NUCLEOTIDE SEQUENCE [LARGE SCALE GENOMIC DNA]</scope>
    <source>
        <strain>ATCC 13939 / DSM 20539 / JCM 16871 / CCUG 27074 / LMG 4051 / NBRC 15346 / NCIMB 9279 / VKM B-1422 / R1</strain>
    </source>
</reference>
<sequence length="278" mass="29812">MTTLGTPVSLGRRTRTGRLELEFGVRHGQTALLRDLQKAPLMVVRPFRLPCGTLMVFIVNPTGGVLGGDHSEIHVEAGAGTRVLILTQSATRVQPSPGGEWATQELHFHVGVGARLEYYPERTLPFAGSRFRQHLRADLGAGAEFGLLETLASGRVQMGERLAWADYRSEVSVYAAQERVYLDRQHFRPGPHSRAPGVLGGNDYFASGVWVAGDSAAGRPAAESPTTAPGWASGLSAGGAVWARGVAATGPALDHAARQLREQVRHDLFGAAPLVLRR</sequence>